<name>MTNB_CANAW</name>
<proteinExistence type="inferred from homology"/>
<sequence length="270" mass="30581">MSAPCHCKHVDDSSSNDKLSALSPELQQEFKDPNHPANLICELCRLFYDNNWVTGTGGGISIRDVDGTNPNLVYIAPSGVQKERIQPWEMFLVELPDEKILRTPNDIPKELTKSYKYKPSACTPLFISCYTLRDAGACIHTHSQHAVMVTLFFENEKEFAISHIEQIKALPKLKYNDETGKIEKIGSMEYYDKLVIPIIENTPHEEDLTDSLQEAIKNYPGASAVLVRRHGIYVWGETVWKAKVYNEAIDYLLELAVKMKLAGIPLVKQE</sequence>
<keyword id="KW-0028">Amino-acid biosynthesis</keyword>
<keyword id="KW-0963">Cytoplasm</keyword>
<keyword id="KW-0456">Lyase</keyword>
<keyword id="KW-0479">Metal-binding</keyword>
<keyword id="KW-0486">Methionine biosynthesis</keyword>
<keyword id="KW-0862">Zinc</keyword>
<reference key="1">
    <citation type="journal article" date="2009" name="Nature">
        <title>Evolution of pathogenicity and sexual reproduction in eight Candida genomes.</title>
        <authorList>
            <person name="Butler G."/>
            <person name="Rasmussen M.D."/>
            <person name="Lin M.F."/>
            <person name="Santos M.A.S."/>
            <person name="Sakthikumar S."/>
            <person name="Munro C.A."/>
            <person name="Rheinbay E."/>
            <person name="Grabherr M."/>
            <person name="Forche A."/>
            <person name="Reedy J.L."/>
            <person name="Agrafioti I."/>
            <person name="Arnaud M.B."/>
            <person name="Bates S."/>
            <person name="Brown A.J.P."/>
            <person name="Brunke S."/>
            <person name="Costanzo M.C."/>
            <person name="Fitzpatrick D.A."/>
            <person name="de Groot P.W.J."/>
            <person name="Harris D."/>
            <person name="Hoyer L.L."/>
            <person name="Hube B."/>
            <person name="Klis F.M."/>
            <person name="Kodira C."/>
            <person name="Lennard N."/>
            <person name="Logue M.E."/>
            <person name="Martin R."/>
            <person name="Neiman A.M."/>
            <person name="Nikolaou E."/>
            <person name="Quail M.A."/>
            <person name="Quinn J."/>
            <person name="Santos M.C."/>
            <person name="Schmitzberger F.F."/>
            <person name="Sherlock G."/>
            <person name="Shah P."/>
            <person name="Silverstein K.A.T."/>
            <person name="Skrzypek M.S."/>
            <person name="Soll D."/>
            <person name="Staggs R."/>
            <person name="Stansfield I."/>
            <person name="Stumpf M.P.H."/>
            <person name="Sudbery P.E."/>
            <person name="Srikantha T."/>
            <person name="Zeng Q."/>
            <person name="Berman J."/>
            <person name="Berriman M."/>
            <person name="Heitman J."/>
            <person name="Gow N.A.R."/>
            <person name="Lorenz M.C."/>
            <person name="Birren B.W."/>
            <person name="Kellis M."/>
            <person name="Cuomo C.A."/>
        </authorList>
    </citation>
    <scope>NUCLEOTIDE SEQUENCE [LARGE SCALE GENOMIC DNA]</scope>
    <source>
        <strain>WO-1</strain>
    </source>
</reference>
<evidence type="ECO:0000255" key="1">
    <source>
        <dbReference type="HAMAP-Rule" id="MF_03116"/>
    </source>
</evidence>
<protein>
    <recommendedName>
        <fullName evidence="1">Methylthioribulose-1-phosphate dehydratase</fullName>
        <shortName evidence="1">MTRu-1-P dehydratase</shortName>
        <ecNumber evidence="1">4.2.1.109</ecNumber>
    </recommendedName>
</protein>
<accession>C4YRG6</accession>
<gene>
    <name evidence="1" type="primary">MDE1</name>
    <name type="ORF">CAWG_04665</name>
</gene>
<dbReference type="EC" id="4.2.1.109" evidence="1"/>
<dbReference type="EMBL" id="CM000311">
    <property type="protein sequence ID" value="EEQ46319.1"/>
    <property type="molecule type" value="Genomic_DNA"/>
</dbReference>
<dbReference type="SMR" id="C4YRG6"/>
<dbReference type="PaxDb" id="5476-C4YRG6"/>
<dbReference type="VEuPathDB" id="FungiDB:CAWG_04665"/>
<dbReference type="HOGENOM" id="CLU_006033_4_0_1"/>
<dbReference type="OMA" id="WFPGTSG"/>
<dbReference type="OrthoDB" id="392at766764"/>
<dbReference type="UniPathway" id="UPA00904">
    <property type="reaction ID" value="UER00875"/>
</dbReference>
<dbReference type="Proteomes" id="UP000001429">
    <property type="component" value="Chromosome 5"/>
</dbReference>
<dbReference type="GO" id="GO:0005737">
    <property type="term" value="C:cytoplasm"/>
    <property type="evidence" value="ECO:0007669"/>
    <property type="project" value="UniProtKB-SubCell"/>
</dbReference>
<dbReference type="GO" id="GO:0046570">
    <property type="term" value="F:methylthioribulose 1-phosphate dehydratase activity"/>
    <property type="evidence" value="ECO:0007669"/>
    <property type="project" value="UniProtKB-UniRule"/>
</dbReference>
<dbReference type="GO" id="GO:0008270">
    <property type="term" value="F:zinc ion binding"/>
    <property type="evidence" value="ECO:0007669"/>
    <property type="project" value="UniProtKB-UniRule"/>
</dbReference>
<dbReference type="GO" id="GO:0019509">
    <property type="term" value="P:L-methionine salvage from methylthioadenosine"/>
    <property type="evidence" value="ECO:0007669"/>
    <property type="project" value="UniProtKB-UniRule"/>
</dbReference>
<dbReference type="FunFam" id="3.40.225.10:FF:000003">
    <property type="entry name" value="Methylthioribulose-1-phosphate dehydratase"/>
    <property type="match status" value="1"/>
</dbReference>
<dbReference type="Gene3D" id="3.40.225.10">
    <property type="entry name" value="Class II aldolase/adducin N-terminal domain"/>
    <property type="match status" value="1"/>
</dbReference>
<dbReference type="HAMAP" id="MF_03116">
    <property type="entry name" value="Salvage_MtnB_euk"/>
    <property type="match status" value="1"/>
</dbReference>
<dbReference type="InterPro" id="IPR001303">
    <property type="entry name" value="Aldolase_II/adducin_N"/>
</dbReference>
<dbReference type="InterPro" id="IPR036409">
    <property type="entry name" value="Aldolase_II/adducin_N_sf"/>
</dbReference>
<dbReference type="InterPro" id="IPR017714">
    <property type="entry name" value="MethylthioRu-1-P_deHdtase_MtnB"/>
</dbReference>
<dbReference type="InterPro" id="IPR027514">
    <property type="entry name" value="Salvage_MtnB_euk"/>
</dbReference>
<dbReference type="NCBIfam" id="TIGR03328">
    <property type="entry name" value="salvage_mtnB"/>
    <property type="match status" value="1"/>
</dbReference>
<dbReference type="PANTHER" id="PTHR10640">
    <property type="entry name" value="METHYLTHIORIBULOSE-1-PHOSPHATE DEHYDRATASE"/>
    <property type="match status" value="1"/>
</dbReference>
<dbReference type="PANTHER" id="PTHR10640:SF7">
    <property type="entry name" value="METHYLTHIORIBULOSE-1-PHOSPHATE DEHYDRATASE"/>
    <property type="match status" value="1"/>
</dbReference>
<dbReference type="Pfam" id="PF00596">
    <property type="entry name" value="Aldolase_II"/>
    <property type="match status" value="1"/>
</dbReference>
<dbReference type="SMART" id="SM01007">
    <property type="entry name" value="Aldolase_II"/>
    <property type="match status" value="1"/>
</dbReference>
<dbReference type="SUPFAM" id="SSF53639">
    <property type="entry name" value="AraD/HMP-PK domain-like"/>
    <property type="match status" value="1"/>
</dbReference>
<organism>
    <name type="scientific">Candida albicans (strain WO-1)</name>
    <name type="common">Yeast</name>
    <dbReference type="NCBI Taxonomy" id="294748"/>
    <lineage>
        <taxon>Eukaryota</taxon>
        <taxon>Fungi</taxon>
        <taxon>Dikarya</taxon>
        <taxon>Ascomycota</taxon>
        <taxon>Saccharomycotina</taxon>
        <taxon>Pichiomycetes</taxon>
        <taxon>Debaryomycetaceae</taxon>
        <taxon>Candida/Lodderomyces clade</taxon>
        <taxon>Candida</taxon>
    </lineage>
</organism>
<feature type="chain" id="PRO_0000393813" description="Methylthioribulose-1-phosphate dehydratase">
    <location>
        <begin position="1"/>
        <end position="270"/>
    </location>
</feature>
<feature type="active site" description="Proton donor/acceptor" evidence="1">
    <location>
        <position position="165"/>
    </location>
</feature>
<feature type="binding site" evidence="1">
    <location>
        <position position="122"/>
    </location>
    <ligand>
        <name>substrate</name>
    </ligand>
</feature>
<feature type="binding site" evidence="1">
    <location>
        <position position="140"/>
    </location>
    <ligand>
        <name>Zn(2+)</name>
        <dbReference type="ChEBI" id="CHEBI:29105"/>
    </ligand>
</feature>
<feature type="binding site" evidence="1">
    <location>
        <position position="142"/>
    </location>
    <ligand>
        <name>Zn(2+)</name>
        <dbReference type="ChEBI" id="CHEBI:29105"/>
    </ligand>
</feature>
<feature type="binding site" evidence="1">
    <location>
        <position position="230"/>
    </location>
    <ligand>
        <name>Zn(2+)</name>
        <dbReference type="ChEBI" id="CHEBI:29105"/>
    </ligand>
</feature>
<comment type="function">
    <text evidence="1">Catalyzes the dehydration of methylthioribulose-1-phosphate (MTRu-1-P) into 2,3-diketo-5-methylthiopentyl-1-phosphate (DK-MTP-1-P).</text>
</comment>
<comment type="catalytic activity">
    <reaction evidence="1">
        <text>5-(methylsulfanyl)-D-ribulose 1-phosphate = 5-methylsulfanyl-2,3-dioxopentyl phosphate + H2O</text>
        <dbReference type="Rhea" id="RHEA:15549"/>
        <dbReference type="ChEBI" id="CHEBI:15377"/>
        <dbReference type="ChEBI" id="CHEBI:58548"/>
        <dbReference type="ChEBI" id="CHEBI:58828"/>
        <dbReference type="EC" id="4.2.1.109"/>
    </reaction>
</comment>
<comment type="cofactor">
    <cofactor evidence="1">
        <name>Zn(2+)</name>
        <dbReference type="ChEBI" id="CHEBI:29105"/>
    </cofactor>
    <text evidence="1">Binds 1 zinc ion per subunit.</text>
</comment>
<comment type="pathway">
    <text evidence="1">Amino-acid biosynthesis; L-methionine biosynthesis via salvage pathway; L-methionine from S-methyl-5-thio-alpha-D-ribose 1-phosphate: step 2/6.</text>
</comment>
<comment type="subcellular location">
    <subcellularLocation>
        <location evidence="1">Cytoplasm</location>
    </subcellularLocation>
</comment>
<comment type="similarity">
    <text evidence="1">Belongs to the aldolase class II family. MtnB subfamily.</text>
</comment>